<keyword id="KW-0012">Acyltransferase</keyword>
<keyword id="KW-0963">Cytoplasm</keyword>
<keyword id="KW-0276">Fatty acid metabolism</keyword>
<keyword id="KW-0442">Lipid degradation</keyword>
<keyword id="KW-0443">Lipid metabolism</keyword>
<keyword id="KW-1185">Reference proteome</keyword>
<keyword id="KW-0808">Transferase</keyword>
<protein>
    <recommendedName>
        <fullName evidence="1">3-ketoacyl-CoA thiolase</fullName>
        <ecNumber evidence="1">2.3.1.16</ecNumber>
    </recommendedName>
    <alternativeName>
        <fullName evidence="1">Acetyl-CoA acyltransferase</fullName>
    </alternativeName>
    <alternativeName>
        <fullName evidence="1">Beta-ketothiolase</fullName>
    </alternativeName>
    <alternativeName>
        <fullName evidence="1">Fatty acid oxidation complex subunit beta</fullName>
    </alternativeName>
</protein>
<name>FADA_HAHCH</name>
<dbReference type="EC" id="2.3.1.16" evidence="1"/>
<dbReference type="EMBL" id="CP000155">
    <property type="protein sequence ID" value="ABC31451.1"/>
    <property type="molecule type" value="Genomic_DNA"/>
</dbReference>
<dbReference type="RefSeq" id="WP_011398516.1">
    <property type="nucleotide sequence ID" value="NC_007645.1"/>
</dbReference>
<dbReference type="SMR" id="Q2SD23"/>
<dbReference type="STRING" id="349521.HCH_04754"/>
<dbReference type="KEGG" id="hch:HCH_04754"/>
<dbReference type="eggNOG" id="COG0183">
    <property type="taxonomic scope" value="Bacteria"/>
</dbReference>
<dbReference type="HOGENOM" id="CLU_031026_2_3_6"/>
<dbReference type="OrthoDB" id="9764638at2"/>
<dbReference type="UniPathway" id="UPA00659"/>
<dbReference type="Proteomes" id="UP000000238">
    <property type="component" value="Chromosome"/>
</dbReference>
<dbReference type="GO" id="GO:0005737">
    <property type="term" value="C:cytoplasm"/>
    <property type="evidence" value="ECO:0007669"/>
    <property type="project" value="UniProtKB-SubCell"/>
</dbReference>
<dbReference type="GO" id="GO:0003988">
    <property type="term" value="F:acetyl-CoA C-acyltransferase activity"/>
    <property type="evidence" value="ECO:0007669"/>
    <property type="project" value="UniProtKB-UniRule"/>
</dbReference>
<dbReference type="GO" id="GO:0006635">
    <property type="term" value="P:fatty acid beta-oxidation"/>
    <property type="evidence" value="ECO:0007669"/>
    <property type="project" value="UniProtKB-UniRule"/>
</dbReference>
<dbReference type="GO" id="GO:0010124">
    <property type="term" value="P:phenylacetate catabolic process"/>
    <property type="evidence" value="ECO:0007669"/>
    <property type="project" value="TreeGrafter"/>
</dbReference>
<dbReference type="CDD" id="cd00751">
    <property type="entry name" value="thiolase"/>
    <property type="match status" value="1"/>
</dbReference>
<dbReference type="FunFam" id="3.40.47.10:FF:000010">
    <property type="entry name" value="Acetyl-CoA acetyltransferase (Thiolase)"/>
    <property type="match status" value="1"/>
</dbReference>
<dbReference type="Gene3D" id="3.40.47.10">
    <property type="match status" value="2"/>
</dbReference>
<dbReference type="HAMAP" id="MF_01620">
    <property type="entry name" value="FadA"/>
    <property type="match status" value="1"/>
</dbReference>
<dbReference type="InterPro" id="IPR012805">
    <property type="entry name" value="FadA"/>
</dbReference>
<dbReference type="InterPro" id="IPR002155">
    <property type="entry name" value="Thiolase"/>
</dbReference>
<dbReference type="InterPro" id="IPR016039">
    <property type="entry name" value="Thiolase-like"/>
</dbReference>
<dbReference type="InterPro" id="IPR050215">
    <property type="entry name" value="Thiolase-like_sf_Thiolase"/>
</dbReference>
<dbReference type="InterPro" id="IPR020615">
    <property type="entry name" value="Thiolase_acyl_enz_int_AS"/>
</dbReference>
<dbReference type="InterPro" id="IPR020610">
    <property type="entry name" value="Thiolase_AS"/>
</dbReference>
<dbReference type="InterPro" id="IPR020617">
    <property type="entry name" value="Thiolase_C"/>
</dbReference>
<dbReference type="InterPro" id="IPR020613">
    <property type="entry name" value="Thiolase_CS"/>
</dbReference>
<dbReference type="InterPro" id="IPR020616">
    <property type="entry name" value="Thiolase_N"/>
</dbReference>
<dbReference type="NCBIfam" id="TIGR01930">
    <property type="entry name" value="AcCoA-C-Actrans"/>
    <property type="match status" value="1"/>
</dbReference>
<dbReference type="NCBIfam" id="TIGR02445">
    <property type="entry name" value="fadA"/>
    <property type="match status" value="1"/>
</dbReference>
<dbReference type="NCBIfam" id="NF006510">
    <property type="entry name" value="PRK08947.1"/>
    <property type="match status" value="1"/>
</dbReference>
<dbReference type="PANTHER" id="PTHR43853:SF11">
    <property type="entry name" value="3-KETOACYL-COA THIOLASE FADA"/>
    <property type="match status" value="1"/>
</dbReference>
<dbReference type="PANTHER" id="PTHR43853">
    <property type="entry name" value="3-KETOACYL-COA THIOLASE, PEROXISOMAL"/>
    <property type="match status" value="1"/>
</dbReference>
<dbReference type="Pfam" id="PF02803">
    <property type="entry name" value="Thiolase_C"/>
    <property type="match status" value="1"/>
</dbReference>
<dbReference type="Pfam" id="PF00108">
    <property type="entry name" value="Thiolase_N"/>
    <property type="match status" value="1"/>
</dbReference>
<dbReference type="PIRSF" id="PIRSF000429">
    <property type="entry name" value="Ac-CoA_Ac_transf"/>
    <property type="match status" value="1"/>
</dbReference>
<dbReference type="SUPFAM" id="SSF53901">
    <property type="entry name" value="Thiolase-like"/>
    <property type="match status" value="2"/>
</dbReference>
<dbReference type="PROSITE" id="PS00098">
    <property type="entry name" value="THIOLASE_1"/>
    <property type="match status" value="1"/>
</dbReference>
<dbReference type="PROSITE" id="PS00737">
    <property type="entry name" value="THIOLASE_2"/>
    <property type="match status" value="1"/>
</dbReference>
<dbReference type="PROSITE" id="PS00099">
    <property type="entry name" value="THIOLASE_3"/>
    <property type="match status" value="1"/>
</dbReference>
<accession>Q2SD23</accession>
<comment type="function">
    <text evidence="1">Catalyzes the final step of fatty acid oxidation in which acetyl-CoA is released and the CoA ester of a fatty acid two carbons shorter is formed.</text>
</comment>
<comment type="catalytic activity">
    <reaction evidence="1">
        <text>an acyl-CoA + acetyl-CoA = a 3-oxoacyl-CoA + CoA</text>
        <dbReference type="Rhea" id="RHEA:21564"/>
        <dbReference type="ChEBI" id="CHEBI:57287"/>
        <dbReference type="ChEBI" id="CHEBI:57288"/>
        <dbReference type="ChEBI" id="CHEBI:58342"/>
        <dbReference type="ChEBI" id="CHEBI:90726"/>
        <dbReference type="EC" id="2.3.1.16"/>
    </reaction>
</comment>
<comment type="pathway">
    <text evidence="1">Lipid metabolism; fatty acid beta-oxidation.</text>
</comment>
<comment type="subunit">
    <text evidence="1">Heterotetramer of two alpha chains (FadB) and two beta chains (FadA).</text>
</comment>
<comment type="subcellular location">
    <subcellularLocation>
        <location evidence="1">Cytoplasm</location>
    </subcellularLocation>
</comment>
<comment type="similarity">
    <text evidence="1">Belongs to the thiolase-like superfamily. Thiolase family.</text>
</comment>
<feature type="chain" id="PRO_0000292891" description="3-ketoacyl-CoA thiolase">
    <location>
        <begin position="1"/>
        <end position="391"/>
    </location>
</feature>
<feature type="active site" description="Acyl-thioester intermediate" evidence="1">
    <location>
        <position position="95"/>
    </location>
</feature>
<feature type="active site" description="Proton acceptor" evidence="1">
    <location>
        <position position="347"/>
    </location>
</feature>
<feature type="active site" description="Proton acceptor" evidence="1">
    <location>
        <position position="377"/>
    </location>
</feature>
<evidence type="ECO:0000255" key="1">
    <source>
        <dbReference type="HAMAP-Rule" id="MF_01620"/>
    </source>
</evidence>
<sequence>MSLNPRDVVVIDCVRSPMGRAKAGCFRNVRAETLSATLIDALFDRNDKVDPAEVEDLIWGCVNQTLEQGFNVARQISLLTRIPHTSSAQTVNRLCGSAMSAIHTAAQAIMTGNGDVFVVGGVEHMGHVPMTQGFDHNPAASKYSAKASNMMGLTAEMLAKMHGISRQQQDEFGARSHRLAHEATLEGRFRNEIISIQGHDDDGFPALIENDETIRPETTAESLAQLRPAFDPKSGTVTAGQSSQLTDGASAMLLMSAERAQALGLTPMAKIRSMATAGCDPAIMGYGPVPATKKALKRAGLKVEDIDFWELNEAFAAQSLPVIKDLKLMGVVDQKVNLNGGAIALGHPLGCSGARISTTLLNVMAAKGGTLGVSTMCIGLGQGIATVWERI</sequence>
<proteinExistence type="inferred from homology"/>
<organism>
    <name type="scientific">Hahella chejuensis (strain KCTC 2396)</name>
    <dbReference type="NCBI Taxonomy" id="349521"/>
    <lineage>
        <taxon>Bacteria</taxon>
        <taxon>Pseudomonadati</taxon>
        <taxon>Pseudomonadota</taxon>
        <taxon>Gammaproteobacteria</taxon>
        <taxon>Oceanospirillales</taxon>
        <taxon>Hahellaceae</taxon>
        <taxon>Hahella</taxon>
    </lineage>
</organism>
<gene>
    <name evidence="1" type="primary">fadA</name>
    <name type="ordered locus">HCH_04754</name>
</gene>
<reference key="1">
    <citation type="journal article" date="2005" name="Nucleic Acids Res.">
        <title>Genomic blueprint of Hahella chejuensis, a marine microbe producing an algicidal agent.</title>
        <authorList>
            <person name="Jeong H."/>
            <person name="Yim J.H."/>
            <person name="Lee C."/>
            <person name="Choi S.-H."/>
            <person name="Park Y.K."/>
            <person name="Yoon S.H."/>
            <person name="Hur C.-G."/>
            <person name="Kang H.-Y."/>
            <person name="Kim D."/>
            <person name="Lee H.H."/>
            <person name="Park K.H."/>
            <person name="Park S.-H."/>
            <person name="Park H.-S."/>
            <person name="Lee H.K."/>
            <person name="Oh T.K."/>
            <person name="Kim J.F."/>
        </authorList>
    </citation>
    <scope>NUCLEOTIDE SEQUENCE [LARGE SCALE GENOMIC DNA]</scope>
    <source>
        <strain>KCTC 2396</strain>
    </source>
</reference>